<keyword id="KW-1185">Reference proteome</keyword>
<protein>
    <recommendedName>
        <fullName>Uncharacterized 9.4 kDa protein in Gp31-cd intergenic region</fullName>
    </recommendedName>
    <alternativeName>
        <fullName>ORF A</fullName>
    </alternativeName>
</protein>
<organismHost>
    <name type="scientific">Escherichia coli</name>
    <dbReference type="NCBI Taxonomy" id="562"/>
</organismHost>
<feature type="chain" id="PRO_0000165176" description="Uncharacterized 9.4 kDa protein in Gp31-cd intergenic region">
    <location>
        <begin position="1"/>
        <end position="78"/>
    </location>
</feature>
<organism>
    <name type="scientific">Enterobacteria phage T4</name>
    <name type="common">Bacteriophage T4</name>
    <dbReference type="NCBI Taxonomy" id="10665"/>
    <lineage>
        <taxon>Viruses</taxon>
        <taxon>Duplodnaviria</taxon>
        <taxon>Heunggongvirae</taxon>
        <taxon>Uroviricota</taxon>
        <taxon>Caudoviricetes</taxon>
        <taxon>Straboviridae</taxon>
        <taxon>Tevenvirinae</taxon>
        <taxon>Tequatrovirus</taxon>
    </lineage>
</organism>
<proteinExistence type="predicted"/>
<accession>P17307</accession>
<name>Y13C_BPT4</name>
<gene>
    <name type="primary">y13C</name>
    <name type="synonym">31.2</name>
</gene>
<reference key="1">
    <citation type="journal article" date="1990" name="Nucleic Acids Res.">
        <title>Cloning and sequencing of bacteriophage T4 genes between map positions 128.3-130.3.</title>
        <authorList>
            <person name="Prilipov A.G."/>
            <person name="Mesyanzhinov V.V."/>
            <person name="Aebi U."/>
            <person name="Kellenberger E."/>
        </authorList>
    </citation>
    <scope>NUCLEOTIDE SEQUENCE [GENOMIC DNA]</scope>
    <source>
        <strain>D</strain>
    </source>
</reference>
<reference key="2">
    <citation type="journal article" date="1990" name="Nucleic Acids Res.">
        <title>Nucleotide sequence of bacteriophage T4 gene 31 region.</title>
        <authorList>
            <person name="Raudonikiene A."/>
            <person name="Nivinskas R."/>
        </authorList>
    </citation>
    <scope>NUCLEOTIDE SEQUENCE [GENOMIC DNA]</scope>
</reference>
<reference key="3">
    <citation type="journal article" date="1992" name="Gene">
        <title>Gene rIII is the nearest downstream neighbour of bacteriophage T4 gene 31.</title>
        <authorList>
            <person name="Raudonikiene A."/>
            <person name="Nivinskas R."/>
        </authorList>
    </citation>
    <scope>NUCLEOTIDE SEQUENCE [GENOMIC DNA]</scope>
</reference>
<reference key="4">
    <citation type="journal article" date="2003" name="Microbiol. Mol. Biol. Rev.">
        <title>Bacteriophage T4 genome.</title>
        <authorList>
            <person name="Miller E.S."/>
            <person name="Kutter E."/>
            <person name="Mosig G."/>
            <person name="Arisaka F."/>
            <person name="Kunisawa T."/>
            <person name="Ruger W."/>
        </authorList>
    </citation>
    <scope>NUCLEOTIDE SEQUENCE [LARGE SCALE GENOMIC DNA]</scope>
</reference>
<reference key="5">
    <citation type="journal article" date="1990" name="Gene">
        <title>Mutational analysis of the phage T4 morphogenetic 31 gene, whose product interacts with the Escherichia coli GroEL protein.</title>
        <authorList>
            <person name="Keppel F."/>
            <person name="Lipinska B."/>
            <person name="Ang D."/>
            <person name="Georgopoulos C."/>
        </authorList>
    </citation>
    <scope>NUCLEOTIDE SEQUENCE [GENOMIC DNA] OF 3-78</scope>
</reference>
<sequence length="78" mass="9397">MKFRLVKLTAISSYSNENISFAVEYKKYFFSKWKQYYKTNWVCIDRPYSWKSDLEKCQKLLSTLKERGTTHIKTVIGK</sequence>
<dbReference type="EMBL" id="X17657">
    <property type="protein sequence ID" value="CAA35649.1"/>
    <property type="molecule type" value="Genomic_DNA"/>
</dbReference>
<dbReference type="EMBL" id="M37882">
    <property type="protein sequence ID" value="AAA32504.1"/>
    <property type="molecule type" value="Genomic_DNA"/>
</dbReference>
<dbReference type="EMBL" id="X54536">
    <property type="protein sequence ID" value="CAA38403.1"/>
    <property type="molecule type" value="Genomic_DNA"/>
</dbReference>
<dbReference type="EMBL" id="AF158101">
    <property type="protein sequence ID" value="AAD42453.1"/>
    <property type="molecule type" value="Genomic_DNA"/>
</dbReference>
<dbReference type="PIR" id="JQ0524">
    <property type="entry name" value="JQ0524"/>
</dbReference>
<dbReference type="RefSeq" id="NP_049827.1">
    <property type="nucleotide sequence ID" value="NC_000866.4"/>
</dbReference>
<dbReference type="SMR" id="P17307"/>
<dbReference type="GeneID" id="1258801"/>
<dbReference type="KEGG" id="vg:1258801"/>
<dbReference type="OrthoDB" id="26966at10239"/>
<dbReference type="Proteomes" id="UP000009087">
    <property type="component" value="Segment"/>
</dbReference>